<accession>Q6J8E7</accession>
<organismHost>
    <name type="scientific">Aves</name>
    <dbReference type="NCBI Taxonomy" id="8782"/>
</organismHost>
<organismHost>
    <name type="scientific">Felis catus</name>
    <name type="common">Cat</name>
    <name type="synonym">Felis silvestris catus</name>
    <dbReference type="NCBI Taxonomy" id="9685"/>
</organismHost>
<organismHost>
    <name type="scientific">Homo sapiens</name>
    <name type="common">Human</name>
    <dbReference type="NCBI Taxonomy" id="9606"/>
</organismHost>
<organismHost>
    <name type="scientific">Panthera pardus</name>
    <name type="common">Leopard</name>
    <name type="synonym">Felis pardus</name>
    <dbReference type="NCBI Taxonomy" id="9691"/>
</organismHost>
<organismHost>
    <name type="scientific">Panthera tigris</name>
    <name type="common">Tiger</name>
    <dbReference type="NCBI Taxonomy" id="9694"/>
</organismHost>
<organismHost>
    <name type="scientific">Sus scrofa</name>
    <name type="common">Pig</name>
    <dbReference type="NCBI Taxonomy" id="9823"/>
</organismHost>
<feature type="signal peptide" evidence="1">
    <location>
        <begin position="1"/>
        <end position="16"/>
    </location>
</feature>
<feature type="chain" id="PRO_0000440820" description="Hemagglutinin" evidence="1">
    <location>
        <begin position="17"/>
        <end position="566"/>
    </location>
</feature>
<feature type="chain" id="PRO_0000440821" description="Hemagglutinin HA1 chain" evidence="1">
    <location>
        <begin position="17"/>
        <end position="346"/>
    </location>
</feature>
<feature type="chain" id="PRO_0000440822" description="Hemagglutinin HA2 chain" evidence="1">
    <location>
        <begin position="347"/>
        <end position="566"/>
    </location>
</feature>
<feature type="topological domain" description="Extracellular" evidence="1">
    <location>
        <begin position="17"/>
        <end position="531"/>
    </location>
</feature>
<feature type="transmembrane region" description="Helical" evidence="1">
    <location>
        <begin position="532"/>
        <end position="552"/>
    </location>
</feature>
<feature type="topological domain" description="Cytoplasmic" evidence="1">
    <location>
        <begin position="553"/>
        <end position="566"/>
    </location>
</feature>
<feature type="site" description="Cleavage; by host" evidence="1">
    <location>
        <begin position="346"/>
        <end position="347"/>
    </location>
</feature>
<feature type="lipid moiety-binding region" description="S-palmitoyl cysteine; by host" evidence="1">
    <location>
        <position position="557"/>
    </location>
</feature>
<feature type="lipid moiety-binding region" description="S-palmitoyl cysteine; by host" evidence="1">
    <location>
        <position position="564"/>
    </location>
</feature>
<feature type="glycosylation site" description="N-linked (GlcNAc...) asparagine; by host" evidence="1">
    <location>
        <position position="26"/>
    </location>
</feature>
<feature type="glycosylation site" description="N-linked (GlcNAc...) asparagine; by host" evidence="1">
    <location>
        <position position="27"/>
    </location>
</feature>
<feature type="glycosylation site" description="N-linked (GlcNAc...) asparagine; by host" evidence="1">
    <location>
        <position position="39"/>
    </location>
</feature>
<feature type="glycosylation site" description="N-linked (GlcNAc...) asparagine; by host" evidence="1">
    <location>
        <position position="181"/>
    </location>
</feature>
<feature type="glycosylation site" description="N-linked (GlcNAc...) asparagine; by host" evidence="1">
    <location>
        <position position="302"/>
    </location>
</feature>
<feature type="glycosylation site" description="N-linked (GlcNAc...) asparagine; by host" evidence="1">
    <location>
        <position position="500"/>
    </location>
</feature>
<feature type="disulfide bond" description="Interchain (between HA1 and HA2 chains)" evidence="1">
    <location>
        <begin position="20"/>
        <end position="483"/>
    </location>
</feature>
<feature type="disulfide bond" evidence="1">
    <location>
        <begin position="58"/>
        <end position="290"/>
    </location>
</feature>
<feature type="disulfide bond" evidence="1">
    <location>
        <begin position="71"/>
        <end position="83"/>
    </location>
</feature>
<feature type="disulfide bond" evidence="1">
    <location>
        <begin position="106"/>
        <end position="151"/>
    </location>
</feature>
<feature type="disulfide bond" evidence="1">
    <location>
        <begin position="294"/>
        <end position="318"/>
    </location>
</feature>
<feature type="disulfide bond" evidence="1">
    <location>
        <begin position="490"/>
        <end position="494"/>
    </location>
</feature>
<feature type="non-terminal residue">
    <location>
        <position position="566"/>
    </location>
</feature>
<protein>
    <recommendedName>
        <fullName evidence="1">Hemagglutinin</fullName>
    </recommendedName>
    <component>
        <recommendedName>
            <fullName evidence="1">Hemagglutinin HA1 chain</fullName>
        </recommendedName>
    </component>
    <component>
        <recommendedName>
            <fullName evidence="1">Hemagglutinin HA2 chain</fullName>
        </recommendedName>
    </component>
</protein>
<comment type="function">
    <text evidence="1">Binds to sialic acid-containing receptors on the cell surface, bringing about the attachment of the virus particle to the cell. This attachment induces virion internalization either through clathrin-dependent endocytosis or through clathrin- and caveolin-independent pathway. Plays a major role in the determination of host range restriction and virulence. Class I viral fusion protein. Responsible for penetration of the virus into the cell cytoplasm by mediating the fusion of the membrane of the endocytosed virus particle with the endosomal membrane. Low pH in endosomes induces an irreversible conformational change in HA2, releasing the fusion hydrophobic peptide. Several trimers are required to form a competent fusion pore.</text>
</comment>
<comment type="subunit">
    <text evidence="1">Homotrimer of disulfide-linked HA1-HA2.</text>
</comment>
<comment type="subcellular location">
    <subcellularLocation>
        <location evidence="1">Virion membrane</location>
        <topology evidence="1">Single-pass type I membrane protein</topology>
    </subcellularLocation>
    <subcellularLocation>
        <location evidence="1">Host apical cell membrane</location>
        <topology evidence="1">Single-pass type I membrane protein</topology>
    </subcellularLocation>
    <text evidence="1">Targeted to the apical plasma membrane in epithelial polarized cells through a signal present in the transmembrane domain. Associated with glycosphingolipid- and cholesterol-enriched detergent-resistant lipid rafts.</text>
</comment>
<comment type="PTM">
    <text evidence="1">Palmitoylated.</text>
</comment>
<comment type="PTM">
    <text evidence="1">In natural infection, inactive HA is matured into HA1 and HA2 outside the cell by one or more trypsin-like, arginine-specific endoprotease secreted by the bronchial epithelial cells. One identified protease that may be involved in this process is secreted in lungs by club cells.</text>
</comment>
<comment type="miscellaneous">
    <text>Major glycoprotein, comprises over 80% of the envelope proteins present in virus particle.</text>
</comment>
<comment type="miscellaneous">
    <text>The extent of infection into host organism is determined by HA. Influenza viruses bud from the apical surface of polarized epithelial cells (e.g. bronchial epithelial cells) into lumen of lungs and are therefore usually pneumotropic. The reason is that HA is cleaved by tryptase clara which is restricted to lungs. However, HAs of H5 and H7 pantropic avian viruses subtypes can be cleaved by furin and subtilisin-type enzymes, allowing the virus to grow in other organs than lungs.</text>
</comment>
<comment type="miscellaneous">
    <text>The influenza A genome consist of 8 RNA segments. Genetic variation of hemagglutinin and/or neuraminidase genes results in the emergence of new influenza strains. The mechanism of variation can be the result of point mutations or the result of genetic reassortment between segments of two different strains.</text>
</comment>
<comment type="similarity">
    <text evidence="1">Belongs to the influenza viruses hemagglutinin family.</text>
</comment>
<organism>
    <name type="scientific">Influenza A virus (strain A/Chicken/Hong Kong/96.1/2002 H5N1 genotype Y)</name>
    <dbReference type="NCBI Taxonomy" id="279803"/>
    <lineage>
        <taxon>Viruses</taxon>
        <taxon>Riboviria</taxon>
        <taxon>Orthornavirae</taxon>
        <taxon>Negarnaviricota</taxon>
        <taxon>Polyploviricotina</taxon>
        <taxon>Insthoviricetes</taxon>
        <taxon>Articulavirales</taxon>
        <taxon>Orthomyxoviridae</taxon>
        <taxon>Alphainfluenzavirus</taxon>
        <taxon>Alphainfluenzavirus influenzae</taxon>
        <taxon>Influenza A virus</taxon>
    </lineage>
</organism>
<reference key="1">
    <citation type="journal article" date="2004" name="Proc. Natl. Acad. Sci. U.S.A.">
        <title>H5N1 influenza: a protean pandemic threat.</title>
        <authorList>
            <person name="Guan Y."/>
            <person name="Poon L.L.M."/>
            <person name="Cheung C.Y."/>
            <person name="Ellis T.M."/>
            <person name="Lim W."/>
            <person name="Lipatov A.S."/>
            <person name="Chan K.H."/>
            <person name="Sturm-Ramirez K.M."/>
            <person name="Cheung C.L."/>
            <person name="Leung Y.H.C."/>
            <person name="Yuen K.Y."/>
            <person name="Webster R.G."/>
            <person name="Peiris J.S.M."/>
        </authorList>
    </citation>
    <scope>NUCLEOTIDE SEQUENCE [GENOMIC RNA]</scope>
</reference>
<keyword id="KW-1167">Clathrin- and caveolin-independent endocytosis of virus by host</keyword>
<keyword id="KW-1165">Clathrin-mediated endocytosis of virus by host</keyword>
<keyword id="KW-1015">Disulfide bond</keyword>
<keyword id="KW-1170">Fusion of virus membrane with host endosomal membrane</keyword>
<keyword id="KW-1168">Fusion of virus membrane with host membrane</keyword>
<keyword id="KW-0325">Glycoprotein</keyword>
<keyword id="KW-0348">Hemagglutinin</keyword>
<keyword id="KW-1032">Host cell membrane</keyword>
<keyword id="KW-1043">Host membrane</keyword>
<keyword id="KW-0945">Host-virus interaction</keyword>
<keyword id="KW-0449">Lipoprotein</keyword>
<keyword id="KW-0472">Membrane</keyword>
<keyword id="KW-0564">Palmitate</keyword>
<keyword id="KW-0732">Signal</keyword>
<keyword id="KW-0812">Transmembrane</keyword>
<keyword id="KW-1133">Transmembrane helix</keyword>
<keyword id="KW-1161">Viral attachment to host cell</keyword>
<keyword id="KW-0261">Viral envelope protein</keyword>
<keyword id="KW-1162">Viral penetration into host cytoplasm</keyword>
<keyword id="KW-0946">Virion</keyword>
<keyword id="KW-1164">Virus endocytosis by host</keyword>
<keyword id="KW-1160">Virus entry into host cell</keyword>
<proteinExistence type="inferred from homology"/>
<sequence>MEKIVLLLAIVSLVKSDQICIGYHANNSTVQVDTIMEKNVTVTHAQDILEKTHNGKLCDLDGVKPLILRDCSVAGWLLGNPMCDEFINVPEWSYIVEKASPANDLCYPGDFNDYEELKHLLSRINHFEKIQIIPKSSWPNHEASLGVSSACPYLGKSSFFRNVVWLIKKNSAYPTIKRSYNNTNQEDLLVLWGIHHPNDAAEQIKLYQNPNTYISVGTSTLNQRLVPKIATRSKVNGQSGRMEFFWTILKPNDAINFESNGNFIAPEYAYKIVKKGDSAIMKSELEYGNCNTKCQTPMGAINSSMPFHNIHPLTIGECPKYVKSNRLVLATGLRNTPQRERRRKKRGLFGAIAGFIEGGWQGMVDGWYGYHHSNEQGSGYAADKESTQKAIDGVTNKVNSIIDKMNTQFEAVGREFNNLERRIENLNKKMEDGFLDVWTYNAELLVLMENERTLDFHDSNVKNLYDKVRLQLRDNAKELGNGCFEFYHKCDDECMESVKNGTYDYPQYSEEARLNREEISGVKLESMGTYQILSIYSTVASSLALAIMVAGLSLWMCSNGSLQCRI</sequence>
<name>HEMA_I02A5</name>
<gene>
    <name evidence="1" type="primary">HA</name>
</gene>
<dbReference type="EMBL" id="AY575878">
    <property type="protein sequence ID" value="AAT39078.1"/>
    <property type="molecule type" value="Genomic_DNA"/>
</dbReference>
<dbReference type="SMR" id="Q6J8E7"/>
<dbReference type="GlyCosmos" id="Q6J8E7">
    <property type="glycosylation" value="6 sites, No reported glycans"/>
</dbReference>
<dbReference type="GO" id="GO:0020002">
    <property type="term" value="C:host cell plasma membrane"/>
    <property type="evidence" value="ECO:0007669"/>
    <property type="project" value="UniProtKB-SubCell"/>
</dbReference>
<dbReference type="GO" id="GO:0016020">
    <property type="term" value="C:membrane"/>
    <property type="evidence" value="ECO:0007669"/>
    <property type="project" value="UniProtKB-KW"/>
</dbReference>
<dbReference type="GO" id="GO:0019031">
    <property type="term" value="C:viral envelope"/>
    <property type="evidence" value="ECO:0007669"/>
    <property type="project" value="UniProtKB-KW"/>
</dbReference>
<dbReference type="GO" id="GO:0055036">
    <property type="term" value="C:virion membrane"/>
    <property type="evidence" value="ECO:0007669"/>
    <property type="project" value="UniProtKB-SubCell"/>
</dbReference>
<dbReference type="GO" id="GO:0046789">
    <property type="term" value="F:host cell surface receptor binding"/>
    <property type="evidence" value="ECO:0007669"/>
    <property type="project" value="InterPro"/>
</dbReference>
<dbReference type="GO" id="GO:0075512">
    <property type="term" value="P:clathrin-dependent endocytosis of virus by host cell"/>
    <property type="evidence" value="ECO:0007669"/>
    <property type="project" value="UniProtKB-KW"/>
</dbReference>
<dbReference type="GO" id="GO:0039654">
    <property type="term" value="P:fusion of virus membrane with host endosome membrane"/>
    <property type="evidence" value="ECO:0007669"/>
    <property type="project" value="UniProtKB-KW"/>
</dbReference>
<dbReference type="GO" id="GO:0019064">
    <property type="term" value="P:fusion of virus membrane with host plasma membrane"/>
    <property type="evidence" value="ECO:0007669"/>
    <property type="project" value="InterPro"/>
</dbReference>
<dbReference type="GO" id="GO:0019062">
    <property type="term" value="P:virion attachment to host cell"/>
    <property type="evidence" value="ECO:0007669"/>
    <property type="project" value="UniProtKB-KW"/>
</dbReference>
<dbReference type="FunFam" id="3.90.209.20:FF:000001">
    <property type="entry name" value="Hemagglutinin"/>
    <property type="match status" value="1"/>
</dbReference>
<dbReference type="Gene3D" id="3.90.20.10">
    <property type="match status" value="1"/>
</dbReference>
<dbReference type="Gene3D" id="3.90.209.20">
    <property type="match status" value="1"/>
</dbReference>
<dbReference type="Gene3D" id="2.10.77.10">
    <property type="entry name" value="Hemagglutinin Chain A, Domain 2"/>
    <property type="match status" value="1"/>
</dbReference>
<dbReference type="HAMAP" id="MF_04072">
    <property type="entry name" value="INFV_HEMA"/>
    <property type="match status" value="1"/>
</dbReference>
<dbReference type="InterPro" id="IPR008980">
    <property type="entry name" value="Capsid_hemagglutn"/>
</dbReference>
<dbReference type="InterPro" id="IPR013828">
    <property type="entry name" value="Hemagglutn_HA1_a/b_dom_sf"/>
</dbReference>
<dbReference type="InterPro" id="IPR000149">
    <property type="entry name" value="Hemagglutn_influenz_A"/>
</dbReference>
<dbReference type="InterPro" id="IPR001364">
    <property type="entry name" value="Hemagglutn_influenz_A/B"/>
</dbReference>
<dbReference type="Pfam" id="PF00509">
    <property type="entry name" value="Hemagglutinin"/>
    <property type="match status" value="1"/>
</dbReference>
<dbReference type="PRINTS" id="PR00330">
    <property type="entry name" value="HEMAGGLUTN1"/>
</dbReference>
<dbReference type="PRINTS" id="PR00329">
    <property type="entry name" value="HEMAGGLUTN12"/>
</dbReference>
<dbReference type="SUPFAM" id="SSF58064">
    <property type="entry name" value="Influenza hemagglutinin (stalk)"/>
    <property type="match status" value="1"/>
</dbReference>
<dbReference type="SUPFAM" id="SSF49818">
    <property type="entry name" value="Viral protein domain"/>
    <property type="match status" value="1"/>
</dbReference>
<evidence type="ECO:0000255" key="1">
    <source>
        <dbReference type="HAMAP-Rule" id="MF_04072"/>
    </source>
</evidence>